<accession>A8LM43</accession>
<proteinExistence type="inferred from homology"/>
<feature type="chain" id="PRO_1000080393" description="Small ribosomal subunit protein uS12">
    <location>
        <begin position="1"/>
        <end position="123"/>
    </location>
</feature>
<feature type="region of interest" description="Disordered" evidence="3">
    <location>
        <begin position="1"/>
        <end position="28"/>
    </location>
</feature>
<feature type="compositionally biased region" description="Basic residues" evidence="3">
    <location>
        <begin position="9"/>
        <end position="21"/>
    </location>
</feature>
<feature type="modified residue" description="3-methylthioaspartic acid" evidence="1">
    <location>
        <position position="89"/>
    </location>
</feature>
<reference key="1">
    <citation type="journal article" date="2010" name="ISME J.">
        <title>The complete genome sequence of the algal symbiont Dinoroseobacter shibae: a hitchhiker's guide to life in the sea.</title>
        <authorList>
            <person name="Wagner-Dobler I."/>
            <person name="Ballhausen B."/>
            <person name="Berger M."/>
            <person name="Brinkhoff T."/>
            <person name="Buchholz I."/>
            <person name="Bunk B."/>
            <person name="Cypionka H."/>
            <person name="Daniel R."/>
            <person name="Drepper T."/>
            <person name="Gerdts G."/>
            <person name="Hahnke S."/>
            <person name="Han C."/>
            <person name="Jahn D."/>
            <person name="Kalhoefer D."/>
            <person name="Kiss H."/>
            <person name="Klenk H.P."/>
            <person name="Kyrpides N."/>
            <person name="Liebl W."/>
            <person name="Liesegang H."/>
            <person name="Meincke L."/>
            <person name="Pati A."/>
            <person name="Petersen J."/>
            <person name="Piekarski T."/>
            <person name="Pommerenke C."/>
            <person name="Pradella S."/>
            <person name="Pukall R."/>
            <person name="Rabus R."/>
            <person name="Stackebrandt E."/>
            <person name="Thole S."/>
            <person name="Thompson L."/>
            <person name="Tielen P."/>
            <person name="Tomasch J."/>
            <person name="von Jan M."/>
            <person name="Wanphrut N."/>
            <person name="Wichels A."/>
            <person name="Zech H."/>
            <person name="Simon M."/>
        </authorList>
    </citation>
    <scope>NUCLEOTIDE SEQUENCE [LARGE SCALE GENOMIC DNA]</scope>
    <source>
        <strain>DSM 16493 / NCIMB 14021 / DFL 12</strain>
    </source>
</reference>
<evidence type="ECO:0000250" key="1"/>
<evidence type="ECO:0000255" key="2">
    <source>
        <dbReference type="HAMAP-Rule" id="MF_00403"/>
    </source>
</evidence>
<evidence type="ECO:0000256" key="3">
    <source>
        <dbReference type="SAM" id="MobiDB-lite"/>
    </source>
</evidence>
<evidence type="ECO:0000305" key="4"/>
<dbReference type="EMBL" id="CP000830">
    <property type="protein sequence ID" value="ABV92020.1"/>
    <property type="molecule type" value="Genomic_DNA"/>
</dbReference>
<dbReference type="RefSeq" id="WP_008182915.1">
    <property type="nucleotide sequence ID" value="NC_009952.1"/>
</dbReference>
<dbReference type="SMR" id="A8LM43"/>
<dbReference type="STRING" id="398580.Dshi_0271"/>
<dbReference type="KEGG" id="dsh:Dshi_0271"/>
<dbReference type="eggNOG" id="COG0048">
    <property type="taxonomic scope" value="Bacteria"/>
</dbReference>
<dbReference type="HOGENOM" id="CLU_104295_1_2_5"/>
<dbReference type="OrthoDB" id="9802366at2"/>
<dbReference type="Proteomes" id="UP000006833">
    <property type="component" value="Chromosome"/>
</dbReference>
<dbReference type="GO" id="GO:0015935">
    <property type="term" value="C:small ribosomal subunit"/>
    <property type="evidence" value="ECO:0007669"/>
    <property type="project" value="InterPro"/>
</dbReference>
<dbReference type="GO" id="GO:0019843">
    <property type="term" value="F:rRNA binding"/>
    <property type="evidence" value="ECO:0007669"/>
    <property type="project" value="UniProtKB-UniRule"/>
</dbReference>
<dbReference type="GO" id="GO:0003735">
    <property type="term" value="F:structural constituent of ribosome"/>
    <property type="evidence" value="ECO:0007669"/>
    <property type="project" value="InterPro"/>
</dbReference>
<dbReference type="GO" id="GO:0000049">
    <property type="term" value="F:tRNA binding"/>
    <property type="evidence" value="ECO:0007669"/>
    <property type="project" value="UniProtKB-UniRule"/>
</dbReference>
<dbReference type="GO" id="GO:0006412">
    <property type="term" value="P:translation"/>
    <property type="evidence" value="ECO:0007669"/>
    <property type="project" value="UniProtKB-UniRule"/>
</dbReference>
<dbReference type="CDD" id="cd03368">
    <property type="entry name" value="Ribosomal_S12"/>
    <property type="match status" value="1"/>
</dbReference>
<dbReference type="FunFam" id="2.40.50.140:FF:000001">
    <property type="entry name" value="30S ribosomal protein S12"/>
    <property type="match status" value="1"/>
</dbReference>
<dbReference type="Gene3D" id="2.40.50.140">
    <property type="entry name" value="Nucleic acid-binding proteins"/>
    <property type="match status" value="1"/>
</dbReference>
<dbReference type="HAMAP" id="MF_00403_B">
    <property type="entry name" value="Ribosomal_uS12_B"/>
    <property type="match status" value="1"/>
</dbReference>
<dbReference type="InterPro" id="IPR012340">
    <property type="entry name" value="NA-bd_OB-fold"/>
</dbReference>
<dbReference type="InterPro" id="IPR006032">
    <property type="entry name" value="Ribosomal_uS12"/>
</dbReference>
<dbReference type="InterPro" id="IPR005679">
    <property type="entry name" value="Ribosomal_uS12_bac"/>
</dbReference>
<dbReference type="NCBIfam" id="TIGR00981">
    <property type="entry name" value="rpsL_bact"/>
    <property type="match status" value="1"/>
</dbReference>
<dbReference type="PANTHER" id="PTHR11652">
    <property type="entry name" value="30S RIBOSOMAL PROTEIN S12 FAMILY MEMBER"/>
    <property type="match status" value="1"/>
</dbReference>
<dbReference type="Pfam" id="PF00164">
    <property type="entry name" value="Ribosom_S12_S23"/>
    <property type="match status" value="1"/>
</dbReference>
<dbReference type="PIRSF" id="PIRSF002133">
    <property type="entry name" value="Ribosomal_S12/S23"/>
    <property type="match status" value="1"/>
</dbReference>
<dbReference type="PRINTS" id="PR01034">
    <property type="entry name" value="RIBOSOMALS12"/>
</dbReference>
<dbReference type="SUPFAM" id="SSF50249">
    <property type="entry name" value="Nucleic acid-binding proteins"/>
    <property type="match status" value="1"/>
</dbReference>
<dbReference type="PROSITE" id="PS00055">
    <property type="entry name" value="RIBOSOMAL_S12"/>
    <property type="match status" value="1"/>
</dbReference>
<keyword id="KW-0488">Methylation</keyword>
<keyword id="KW-1185">Reference proteome</keyword>
<keyword id="KW-0687">Ribonucleoprotein</keyword>
<keyword id="KW-0689">Ribosomal protein</keyword>
<keyword id="KW-0694">RNA-binding</keyword>
<keyword id="KW-0699">rRNA-binding</keyword>
<keyword id="KW-0820">tRNA-binding</keyword>
<gene>
    <name evidence="2" type="primary">rpsL</name>
    <name type="ordered locus">Dshi_0271</name>
</gene>
<sequence length="123" mass="14109">MPTIQQLIRKPRQPKVKRSKSQHLESCPQKRGVCTRVYTTTPKKPNSAMRKVAKVRLTNGFEVISYIPGESHNLQEHSVVLIRGGRVKDLPGVRYHILRGVLDTQGVKDRKQRRSKYGAKRPK</sequence>
<organism>
    <name type="scientific">Dinoroseobacter shibae (strain DSM 16493 / NCIMB 14021 / DFL 12)</name>
    <dbReference type="NCBI Taxonomy" id="398580"/>
    <lineage>
        <taxon>Bacteria</taxon>
        <taxon>Pseudomonadati</taxon>
        <taxon>Pseudomonadota</taxon>
        <taxon>Alphaproteobacteria</taxon>
        <taxon>Rhodobacterales</taxon>
        <taxon>Roseobacteraceae</taxon>
        <taxon>Dinoroseobacter</taxon>
    </lineage>
</organism>
<name>RS12_DINSH</name>
<protein>
    <recommendedName>
        <fullName evidence="2">Small ribosomal subunit protein uS12</fullName>
    </recommendedName>
    <alternativeName>
        <fullName evidence="4">30S ribosomal protein S12</fullName>
    </alternativeName>
</protein>
<comment type="function">
    <text evidence="2">With S4 and S5 plays an important role in translational accuracy.</text>
</comment>
<comment type="function">
    <text evidence="2">Interacts with and stabilizes bases of the 16S rRNA that are involved in tRNA selection in the A site and with the mRNA backbone. Located at the interface of the 30S and 50S subunits, it traverses the body of the 30S subunit contacting proteins on the other side and probably holding the rRNA structure together. The combined cluster of proteins S8, S12 and S17 appears to hold together the shoulder and platform of the 30S subunit.</text>
</comment>
<comment type="subunit">
    <text evidence="2">Part of the 30S ribosomal subunit. Contacts proteins S8 and S17. May interact with IF1 in the 30S initiation complex.</text>
</comment>
<comment type="similarity">
    <text evidence="2">Belongs to the universal ribosomal protein uS12 family.</text>
</comment>